<evidence type="ECO:0000255" key="1">
    <source>
        <dbReference type="HAMAP-Rule" id="MF_00097"/>
    </source>
</evidence>
<keyword id="KW-0460">Magnesium</keyword>
<keyword id="KW-0479">Metal-binding</keyword>
<keyword id="KW-1185">Reference proteome</keyword>
<keyword id="KW-0784">Thiamine biosynthesis</keyword>
<keyword id="KW-0808">Transferase</keyword>
<reference key="1">
    <citation type="journal article" date="2016" name="Stand. Genomic Sci.">
        <title>Complete genome sequence of Methanospirillum hungatei type strain JF1.</title>
        <authorList>
            <person name="Gunsalus R.P."/>
            <person name="Cook L.E."/>
            <person name="Crable B."/>
            <person name="Rohlin L."/>
            <person name="McDonald E."/>
            <person name="Mouttaki H."/>
            <person name="Sieber J.R."/>
            <person name="Poweleit N."/>
            <person name="Zhou H."/>
            <person name="Lapidus A.L."/>
            <person name="Daligault H.E."/>
            <person name="Land M."/>
            <person name="Gilna P."/>
            <person name="Ivanova N."/>
            <person name="Kyrpides N."/>
            <person name="Culley D.E."/>
            <person name="McInerney M.J."/>
        </authorList>
    </citation>
    <scope>NUCLEOTIDE SEQUENCE [LARGE SCALE GENOMIC DNA]</scope>
    <source>
        <strain>ATCC 27890 / DSM 864 / NBRC 100397 / JF-1</strain>
    </source>
</reference>
<comment type="function">
    <text evidence="1">Condenses 4-methyl-5-(beta-hydroxyethyl)thiazole monophosphate (THZ-P) and 2-methyl-4-amino-5-hydroxymethyl pyrimidine pyrophosphate (HMP-PP) to form thiamine monophosphate (TMP).</text>
</comment>
<comment type="catalytic activity">
    <reaction evidence="1">
        <text>2-[(2R,5Z)-2-carboxy-4-methylthiazol-5(2H)-ylidene]ethyl phosphate + 4-amino-2-methyl-5-(diphosphooxymethyl)pyrimidine + 2 H(+) = thiamine phosphate + CO2 + diphosphate</text>
        <dbReference type="Rhea" id="RHEA:47844"/>
        <dbReference type="ChEBI" id="CHEBI:15378"/>
        <dbReference type="ChEBI" id="CHEBI:16526"/>
        <dbReference type="ChEBI" id="CHEBI:33019"/>
        <dbReference type="ChEBI" id="CHEBI:37575"/>
        <dbReference type="ChEBI" id="CHEBI:57841"/>
        <dbReference type="ChEBI" id="CHEBI:62899"/>
        <dbReference type="EC" id="2.5.1.3"/>
    </reaction>
</comment>
<comment type="catalytic activity">
    <reaction evidence="1">
        <text>2-(2-carboxy-4-methylthiazol-5-yl)ethyl phosphate + 4-amino-2-methyl-5-(diphosphooxymethyl)pyrimidine + 2 H(+) = thiamine phosphate + CO2 + diphosphate</text>
        <dbReference type="Rhea" id="RHEA:47848"/>
        <dbReference type="ChEBI" id="CHEBI:15378"/>
        <dbReference type="ChEBI" id="CHEBI:16526"/>
        <dbReference type="ChEBI" id="CHEBI:33019"/>
        <dbReference type="ChEBI" id="CHEBI:37575"/>
        <dbReference type="ChEBI" id="CHEBI:57841"/>
        <dbReference type="ChEBI" id="CHEBI:62890"/>
        <dbReference type="EC" id="2.5.1.3"/>
    </reaction>
</comment>
<comment type="catalytic activity">
    <reaction evidence="1">
        <text>4-methyl-5-(2-phosphooxyethyl)-thiazole + 4-amino-2-methyl-5-(diphosphooxymethyl)pyrimidine + H(+) = thiamine phosphate + diphosphate</text>
        <dbReference type="Rhea" id="RHEA:22328"/>
        <dbReference type="ChEBI" id="CHEBI:15378"/>
        <dbReference type="ChEBI" id="CHEBI:33019"/>
        <dbReference type="ChEBI" id="CHEBI:37575"/>
        <dbReference type="ChEBI" id="CHEBI:57841"/>
        <dbReference type="ChEBI" id="CHEBI:58296"/>
        <dbReference type="EC" id="2.5.1.3"/>
    </reaction>
</comment>
<comment type="cofactor">
    <cofactor evidence="1">
        <name>Mg(2+)</name>
        <dbReference type="ChEBI" id="CHEBI:18420"/>
    </cofactor>
    <text evidence="1">Binds 1 Mg(2+) ion per subunit.</text>
</comment>
<comment type="pathway">
    <text evidence="1">Cofactor biosynthesis; thiamine diphosphate biosynthesis; thiamine phosphate from 4-amino-2-methyl-5-diphosphomethylpyrimidine and 4-methyl-5-(2-phosphoethyl)-thiazole: step 1/1.</text>
</comment>
<comment type="similarity">
    <text evidence="1">Belongs to the thiamine-phosphate synthase family.</text>
</comment>
<name>THIE_METHJ</name>
<dbReference type="EC" id="2.5.1.3" evidence="1"/>
<dbReference type="EMBL" id="CP000254">
    <property type="protein sequence ID" value="ABD41645.1"/>
    <property type="molecule type" value="Genomic_DNA"/>
</dbReference>
<dbReference type="RefSeq" id="WP_011448907.1">
    <property type="nucleotide sequence ID" value="NC_007796.1"/>
</dbReference>
<dbReference type="SMR" id="Q2FM63"/>
<dbReference type="STRING" id="323259.Mhun_1934"/>
<dbReference type="EnsemblBacteria" id="ABD41645">
    <property type="protein sequence ID" value="ABD41645"/>
    <property type="gene ID" value="Mhun_1934"/>
</dbReference>
<dbReference type="GeneID" id="3924131"/>
<dbReference type="KEGG" id="mhu:Mhun_1934"/>
<dbReference type="eggNOG" id="arCOG01089">
    <property type="taxonomic scope" value="Archaea"/>
</dbReference>
<dbReference type="HOGENOM" id="CLU_018272_3_2_2"/>
<dbReference type="InParanoid" id="Q2FM63"/>
<dbReference type="OrthoDB" id="85572at2157"/>
<dbReference type="UniPathway" id="UPA00060">
    <property type="reaction ID" value="UER00141"/>
</dbReference>
<dbReference type="Proteomes" id="UP000001941">
    <property type="component" value="Chromosome"/>
</dbReference>
<dbReference type="GO" id="GO:0005737">
    <property type="term" value="C:cytoplasm"/>
    <property type="evidence" value="ECO:0007669"/>
    <property type="project" value="TreeGrafter"/>
</dbReference>
<dbReference type="GO" id="GO:0000287">
    <property type="term" value="F:magnesium ion binding"/>
    <property type="evidence" value="ECO:0007669"/>
    <property type="project" value="UniProtKB-UniRule"/>
</dbReference>
<dbReference type="GO" id="GO:0004789">
    <property type="term" value="F:thiamine-phosphate diphosphorylase activity"/>
    <property type="evidence" value="ECO:0007669"/>
    <property type="project" value="UniProtKB-UniRule"/>
</dbReference>
<dbReference type="GO" id="GO:0009228">
    <property type="term" value="P:thiamine biosynthetic process"/>
    <property type="evidence" value="ECO:0007669"/>
    <property type="project" value="UniProtKB-KW"/>
</dbReference>
<dbReference type="GO" id="GO:0009229">
    <property type="term" value="P:thiamine diphosphate biosynthetic process"/>
    <property type="evidence" value="ECO:0007669"/>
    <property type="project" value="UniProtKB-UniRule"/>
</dbReference>
<dbReference type="CDD" id="cd00564">
    <property type="entry name" value="TMP_TenI"/>
    <property type="match status" value="1"/>
</dbReference>
<dbReference type="FunFam" id="3.20.20.70:FF:000096">
    <property type="entry name" value="Thiamine-phosphate synthase"/>
    <property type="match status" value="1"/>
</dbReference>
<dbReference type="Gene3D" id="3.20.20.70">
    <property type="entry name" value="Aldolase class I"/>
    <property type="match status" value="1"/>
</dbReference>
<dbReference type="HAMAP" id="MF_00097">
    <property type="entry name" value="TMP_synthase"/>
    <property type="match status" value="1"/>
</dbReference>
<dbReference type="InterPro" id="IPR013785">
    <property type="entry name" value="Aldolase_TIM"/>
</dbReference>
<dbReference type="InterPro" id="IPR036206">
    <property type="entry name" value="ThiamineP_synth_sf"/>
</dbReference>
<dbReference type="InterPro" id="IPR022998">
    <property type="entry name" value="ThiamineP_synth_TenI"/>
</dbReference>
<dbReference type="InterPro" id="IPR034291">
    <property type="entry name" value="TMP_synthase"/>
</dbReference>
<dbReference type="NCBIfam" id="TIGR00693">
    <property type="entry name" value="thiE"/>
    <property type="match status" value="1"/>
</dbReference>
<dbReference type="PANTHER" id="PTHR20857">
    <property type="entry name" value="THIAMINE-PHOSPHATE PYROPHOSPHORYLASE"/>
    <property type="match status" value="1"/>
</dbReference>
<dbReference type="PANTHER" id="PTHR20857:SF15">
    <property type="entry name" value="THIAMINE-PHOSPHATE SYNTHASE"/>
    <property type="match status" value="1"/>
</dbReference>
<dbReference type="Pfam" id="PF02581">
    <property type="entry name" value="TMP-TENI"/>
    <property type="match status" value="1"/>
</dbReference>
<dbReference type="SUPFAM" id="SSF51391">
    <property type="entry name" value="Thiamin phosphate synthase"/>
    <property type="match status" value="1"/>
</dbReference>
<gene>
    <name evidence="1" type="primary">thiE</name>
    <name type="ordered locus">Mhun_1934</name>
</gene>
<protein>
    <recommendedName>
        <fullName evidence="1">Thiamine-phosphate synthase</fullName>
        <shortName evidence="1">TP synthase</shortName>
        <shortName evidence="1">TPS</shortName>
        <ecNumber evidence="1">2.5.1.3</ecNumber>
    </recommendedName>
    <alternativeName>
        <fullName evidence="1">Thiamine-phosphate pyrophosphorylase</fullName>
        <shortName evidence="1">TMP pyrophosphorylase</shortName>
        <shortName evidence="1">TMP-PPase</shortName>
    </alternativeName>
</protein>
<sequence length="206" mass="21361">MDCGLYIITDEILAPGCSHIQIAKESLSGGAKIIQLRDKRRNAAELYAIAQEIRSLCTQHHARFIVNDRLDIALAVQADGVHLGQDDLPLSAARLLAPRPFIIGVSVGTVEEAVLAEKGGADYLGVGPVYPTGTKADAGPAVGPGLIRSIRERVAIPIIAIGGINLTNAGDVLAAGADGIAVISAVICSPDIAAASRKFADLMIHS</sequence>
<organism>
    <name type="scientific">Methanospirillum hungatei JF-1 (strain ATCC 27890 / DSM 864 / NBRC 100397 / JF-1)</name>
    <dbReference type="NCBI Taxonomy" id="323259"/>
    <lineage>
        <taxon>Archaea</taxon>
        <taxon>Methanobacteriati</taxon>
        <taxon>Methanobacteriota</taxon>
        <taxon>Stenosarchaea group</taxon>
        <taxon>Methanomicrobia</taxon>
        <taxon>Methanomicrobiales</taxon>
        <taxon>Methanospirillaceae</taxon>
        <taxon>Methanospirillum</taxon>
    </lineage>
</organism>
<accession>Q2FM63</accession>
<feature type="chain" id="PRO_0000336438" description="Thiamine-phosphate synthase">
    <location>
        <begin position="1"/>
        <end position="206"/>
    </location>
</feature>
<feature type="binding site" evidence="1">
    <location>
        <begin position="35"/>
        <end position="39"/>
    </location>
    <ligand>
        <name>4-amino-2-methyl-5-(diphosphooxymethyl)pyrimidine</name>
        <dbReference type="ChEBI" id="CHEBI:57841"/>
    </ligand>
</feature>
<feature type="binding site" evidence="1">
    <location>
        <position position="67"/>
    </location>
    <ligand>
        <name>4-amino-2-methyl-5-(diphosphooxymethyl)pyrimidine</name>
        <dbReference type="ChEBI" id="CHEBI:57841"/>
    </ligand>
</feature>
<feature type="binding site" evidence="1">
    <location>
        <position position="68"/>
    </location>
    <ligand>
        <name>Mg(2+)</name>
        <dbReference type="ChEBI" id="CHEBI:18420"/>
    </ligand>
</feature>
<feature type="binding site" evidence="1">
    <location>
        <position position="87"/>
    </location>
    <ligand>
        <name>Mg(2+)</name>
        <dbReference type="ChEBI" id="CHEBI:18420"/>
    </ligand>
</feature>
<feature type="binding site" evidence="1">
    <location>
        <position position="106"/>
    </location>
    <ligand>
        <name>4-amino-2-methyl-5-(diphosphooxymethyl)pyrimidine</name>
        <dbReference type="ChEBI" id="CHEBI:57841"/>
    </ligand>
</feature>
<feature type="binding site" evidence="1">
    <location>
        <begin position="132"/>
        <end position="134"/>
    </location>
    <ligand>
        <name>2-[(2R,5Z)-2-carboxy-4-methylthiazol-5(2H)-ylidene]ethyl phosphate</name>
        <dbReference type="ChEBI" id="CHEBI:62899"/>
    </ligand>
</feature>
<feature type="binding site" evidence="1">
    <location>
        <position position="135"/>
    </location>
    <ligand>
        <name>4-amino-2-methyl-5-(diphosphooxymethyl)pyrimidine</name>
        <dbReference type="ChEBI" id="CHEBI:57841"/>
    </ligand>
</feature>
<feature type="binding site" evidence="1">
    <location>
        <position position="163"/>
    </location>
    <ligand>
        <name>2-[(2R,5Z)-2-carboxy-4-methylthiazol-5(2H)-ylidene]ethyl phosphate</name>
        <dbReference type="ChEBI" id="CHEBI:62899"/>
    </ligand>
</feature>
<feature type="binding site" evidence="1">
    <location>
        <begin position="183"/>
        <end position="184"/>
    </location>
    <ligand>
        <name>2-[(2R,5Z)-2-carboxy-4-methylthiazol-5(2H)-ylidene]ethyl phosphate</name>
        <dbReference type="ChEBI" id="CHEBI:62899"/>
    </ligand>
</feature>
<proteinExistence type="inferred from homology"/>